<proteinExistence type="inferred from homology"/>
<evidence type="ECO:0000255" key="1">
    <source>
        <dbReference type="HAMAP-Rule" id="MF_00446"/>
    </source>
</evidence>
<evidence type="ECO:0000256" key="2">
    <source>
        <dbReference type="SAM" id="MobiDB-lite"/>
    </source>
</evidence>
<accession>Q3A3I8</accession>
<comment type="function">
    <text evidence="1">Catalyzes the pyruvoyl-dependent decarboxylation of aspartate to produce beta-alanine.</text>
</comment>
<comment type="catalytic activity">
    <reaction evidence="1">
        <text>L-aspartate + H(+) = beta-alanine + CO2</text>
        <dbReference type="Rhea" id="RHEA:19497"/>
        <dbReference type="ChEBI" id="CHEBI:15378"/>
        <dbReference type="ChEBI" id="CHEBI:16526"/>
        <dbReference type="ChEBI" id="CHEBI:29991"/>
        <dbReference type="ChEBI" id="CHEBI:57966"/>
        <dbReference type="EC" id="4.1.1.11"/>
    </reaction>
</comment>
<comment type="cofactor">
    <cofactor evidence="1">
        <name>pyruvate</name>
        <dbReference type="ChEBI" id="CHEBI:15361"/>
    </cofactor>
    <text evidence="1">Binds 1 pyruvoyl group covalently per subunit.</text>
</comment>
<comment type="pathway">
    <text evidence="1">Cofactor biosynthesis; (R)-pantothenate biosynthesis; beta-alanine from L-aspartate: step 1/1.</text>
</comment>
<comment type="subunit">
    <text evidence="1">Heterooctamer of four alpha and four beta subunits.</text>
</comment>
<comment type="subcellular location">
    <subcellularLocation>
        <location evidence="1">Cytoplasm</location>
    </subcellularLocation>
</comment>
<comment type="PTM">
    <text evidence="1">Is synthesized initially as an inactive proenzyme, which is activated by self-cleavage at a specific serine bond to produce a beta-subunit with a hydroxyl group at its C-terminus and an alpha-subunit with a pyruvoyl group at its N-terminus.</text>
</comment>
<comment type="similarity">
    <text evidence="1">Belongs to the PanD family.</text>
</comment>
<protein>
    <recommendedName>
        <fullName evidence="1">Aspartate 1-decarboxylase</fullName>
        <ecNumber evidence="1">4.1.1.11</ecNumber>
    </recommendedName>
    <alternativeName>
        <fullName evidence="1">Aspartate alpha-decarboxylase</fullName>
    </alternativeName>
    <component>
        <recommendedName>
            <fullName evidence="1">Aspartate 1-decarboxylase beta chain</fullName>
        </recommendedName>
    </component>
    <component>
        <recommendedName>
            <fullName evidence="1">Aspartate 1-decarboxylase alpha chain</fullName>
        </recommendedName>
    </component>
</protein>
<sequence length="131" mass="14332">MKRKMLKSKIHRATVTGADLHYEGSITIDSELMKQADILPYEAVDIWNVTYGTRFQTYAIEGQPGSGVICINGAAARMVSKGDMVIIASWIDIDADKAAAYEPKLVFVDDKNVPTTQKSENPGQGSLRNAI</sequence>
<feature type="chain" id="PRO_0000236879" description="Aspartate 1-decarboxylase beta chain" evidence="1">
    <location>
        <begin position="1"/>
        <end position="24"/>
    </location>
</feature>
<feature type="chain" id="PRO_0000236880" description="Aspartate 1-decarboxylase alpha chain" evidence="1">
    <location>
        <begin position="25"/>
        <end position="131"/>
    </location>
</feature>
<feature type="region of interest" description="Disordered" evidence="2">
    <location>
        <begin position="112"/>
        <end position="131"/>
    </location>
</feature>
<feature type="compositionally biased region" description="Polar residues" evidence="2">
    <location>
        <begin position="113"/>
        <end position="131"/>
    </location>
</feature>
<feature type="active site" description="Schiff-base intermediate with substrate; via pyruvic acid" evidence="1">
    <location>
        <position position="25"/>
    </location>
</feature>
<feature type="active site" description="Proton donor" evidence="1">
    <location>
        <position position="58"/>
    </location>
</feature>
<feature type="binding site" evidence="1">
    <location>
        <position position="57"/>
    </location>
    <ligand>
        <name>substrate</name>
    </ligand>
</feature>
<feature type="binding site" evidence="1">
    <location>
        <begin position="73"/>
        <end position="75"/>
    </location>
    <ligand>
        <name>substrate</name>
    </ligand>
</feature>
<feature type="modified residue" description="Pyruvic acid (Ser)" evidence="1">
    <location>
        <position position="25"/>
    </location>
</feature>
<dbReference type="EC" id="4.1.1.11" evidence="1"/>
<dbReference type="EMBL" id="CP000142">
    <property type="protein sequence ID" value="ABA89069.1"/>
    <property type="molecule type" value="Genomic_DNA"/>
</dbReference>
<dbReference type="RefSeq" id="WP_011341572.1">
    <property type="nucleotide sequence ID" value="NC_007498.2"/>
</dbReference>
<dbReference type="SMR" id="Q3A3I8"/>
<dbReference type="STRING" id="338963.Pcar_1828"/>
<dbReference type="KEGG" id="pca:Pcar_1828"/>
<dbReference type="eggNOG" id="COG0853">
    <property type="taxonomic scope" value="Bacteria"/>
</dbReference>
<dbReference type="HOGENOM" id="CLU_115305_2_0_7"/>
<dbReference type="OrthoDB" id="9803983at2"/>
<dbReference type="UniPathway" id="UPA00028">
    <property type="reaction ID" value="UER00002"/>
</dbReference>
<dbReference type="Proteomes" id="UP000002534">
    <property type="component" value="Chromosome"/>
</dbReference>
<dbReference type="GO" id="GO:0005829">
    <property type="term" value="C:cytosol"/>
    <property type="evidence" value="ECO:0007669"/>
    <property type="project" value="TreeGrafter"/>
</dbReference>
<dbReference type="GO" id="GO:0004068">
    <property type="term" value="F:aspartate 1-decarboxylase activity"/>
    <property type="evidence" value="ECO:0007669"/>
    <property type="project" value="UniProtKB-UniRule"/>
</dbReference>
<dbReference type="GO" id="GO:0006523">
    <property type="term" value="P:alanine biosynthetic process"/>
    <property type="evidence" value="ECO:0007669"/>
    <property type="project" value="InterPro"/>
</dbReference>
<dbReference type="GO" id="GO:0015940">
    <property type="term" value="P:pantothenate biosynthetic process"/>
    <property type="evidence" value="ECO:0007669"/>
    <property type="project" value="UniProtKB-UniRule"/>
</dbReference>
<dbReference type="CDD" id="cd06919">
    <property type="entry name" value="Asp_decarbox"/>
    <property type="match status" value="1"/>
</dbReference>
<dbReference type="Gene3D" id="2.40.40.20">
    <property type="match status" value="1"/>
</dbReference>
<dbReference type="HAMAP" id="MF_00446">
    <property type="entry name" value="PanD"/>
    <property type="match status" value="1"/>
</dbReference>
<dbReference type="InterPro" id="IPR009010">
    <property type="entry name" value="Asp_de-COase-like_dom_sf"/>
</dbReference>
<dbReference type="InterPro" id="IPR003190">
    <property type="entry name" value="Asp_decarbox"/>
</dbReference>
<dbReference type="NCBIfam" id="TIGR00223">
    <property type="entry name" value="panD"/>
    <property type="match status" value="1"/>
</dbReference>
<dbReference type="PANTHER" id="PTHR21012">
    <property type="entry name" value="ASPARTATE 1-DECARBOXYLASE"/>
    <property type="match status" value="1"/>
</dbReference>
<dbReference type="PANTHER" id="PTHR21012:SF0">
    <property type="entry name" value="ASPARTATE 1-DECARBOXYLASE"/>
    <property type="match status" value="1"/>
</dbReference>
<dbReference type="Pfam" id="PF02261">
    <property type="entry name" value="Asp_decarbox"/>
    <property type="match status" value="1"/>
</dbReference>
<dbReference type="PIRSF" id="PIRSF006246">
    <property type="entry name" value="Asp_decarbox"/>
    <property type="match status" value="1"/>
</dbReference>
<dbReference type="SUPFAM" id="SSF50692">
    <property type="entry name" value="ADC-like"/>
    <property type="match status" value="1"/>
</dbReference>
<reference key="1">
    <citation type="submission" date="2005-10" db="EMBL/GenBank/DDBJ databases">
        <title>Complete sequence of Pelobacter carbinolicus DSM 2380.</title>
        <authorList>
            <person name="Copeland A."/>
            <person name="Lucas S."/>
            <person name="Lapidus A."/>
            <person name="Barry K."/>
            <person name="Detter J.C."/>
            <person name="Glavina T."/>
            <person name="Hammon N."/>
            <person name="Israni S."/>
            <person name="Pitluck S."/>
            <person name="Chertkov O."/>
            <person name="Schmutz J."/>
            <person name="Larimer F."/>
            <person name="Land M."/>
            <person name="Kyrpides N."/>
            <person name="Ivanova N."/>
            <person name="Richardson P."/>
        </authorList>
    </citation>
    <scope>NUCLEOTIDE SEQUENCE [LARGE SCALE GENOMIC DNA]</scope>
    <source>
        <strain>DSM 2380 / NBRC 103641 / GraBd1</strain>
    </source>
</reference>
<keyword id="KW-0068">Autocatalytic cleavage</keyword>
<keyword id="KW-0963">Cytoplasm</keyword>
<keyword id="KW-0210">Decarboxylase</keyword>
<keyword id="KW-0456">Lyase</keyword>
<keyword id="KW-0566">Pantothenate biosynthesis</keyword>
<keyword id="KW-0670">Pyruvate</keyword>
<keyword id="KW-1185">Reference proteome</keyword>
<keyword id="KW-0704">Schiff base</keyword>
<keyword id="KW-0865">Zymogen</keyword>
<organism>
    <name type="scientific">Syntrophotalea carbinolica (strain DSM 2380 / NBRC 103641 / GraBd1)</name>
    <name type="common">Pelobacter carbinolicus</name>
    <dbReference type="NCBI Taxonomy" id="338963"/>
    <lineage>
        <taxon>Bacteria</taxon>
        <taxon>Pseudomonadati</taxon>
        <taxon>Thermodesulfobacteriota</taxon>
        <taxon>Desulfuromonadia</taxon>
        <taxon>Desulfuromonadales</taxon>
        <taxon>Syntrophotaleaceae</taxon>
        <taxon>Syntrophotalea</taxon>
    </lineage>
</organism>
<name>PAND_SYNC1</name>
<gene>
    <name evidence="1" type="primary">panD</name>
    <name type="ordered locus">Pcar_1828</name>
</gene>